<protein>
    <recommendedName>
        <fullName evidence="1">Protein PAE0875</fullName>
    </recommendedName>
</protein>
<sequence>MKGVAWILSVGNELLIGRVVNTNAAWLASKLTFLGYSVRRIVVVPDEENDIVEAFREAINRADVVILTGGLGPTPDDITNLAFCKALGVEAVVNDEALKMVRGKYESRGYALTPERIKMAMMPPGATPLPNPVGTAPGILYESGGKLVVLLPGVPKEMEAIFENHVEPLLKSRGPPVYFSEREVVVRGVPEADIAPVIREVMRLDKRVYVKSHPRGFEVNAPLLHIHIYASAGSKEEAEALVSKASDRLIELIKLKYGDRASISTG</sequence>
<feature type="chain" id="PRO_0000336539" description="Protein PAE0875">
    <location>
        <begin position="1"/>
        <end position="266"/>
    </location>
</feature>
<accession>Q8ZYA5</accession>
<keyword id="KW-1185">Reference proteome</keyword>
<reference key="1">
    <citation type="journal article" date="2002" name="Proc. Natl. Acad. Sci. U.S.A.">
        <title>Genome sequence of the hyperthermophilic crenarchaeon Pyrobaculum aerophilum.</title>
        <authorList>
            <person name="Fitz-Gibbon S.T."/>
            <person name="Ladner H."/>
            <person name="Kim U.-J."/>
            <person name="Stetter K.O."/>
            <person name="Simon M.I."/>
            <person name="Miller J.H."/>
        </authorList>
    </citation>
    <scope>NUCLEOTIDE SEQUENCE [LARGE SCALE GENOMIC DNA]</scope>
    <source>
        <strain>ATCC 51768 / DSM 7523 / JCM 9630 / CIP 104966 / NBRC 100827 / IM2</strain>
    </source>
</reference>
<organism>
    <name type="scientific">Pyrobaculum aerophilum (strain ATCC 51768 / DSM 7523 / JCM 9630 / CIP 104966 / NBRC 100827 / IM2)</name>
    <dbReference type="NCBI Taxonomy" id="178306"/>
    <lineage>
        <taxon>Archaea</taxon>
        <taxon>Thermoproteota</taxon>
        <taxon>Thermoprotei</taxon>
        <taxon>Thermoproteales</taxon>
        <taxon>Thermoproteaceae</taxon>
        <taxon>Pyrobaculum</taxon>
    </lineage>
</organism>
<name>Y875_PYRAE</name>
<dbReference type="EMBL" id="AE009441">
    <property type="protein sequence ID" value="AAL63090.1"/>
    <property type="molecule type" value="Genomic_DNA"/>
</dbReference>
<dbReference type="RefSeq" id="WP_011007562.1">
    <property type="nucleotide sequence ID" value="NC_003364.1"/>
</dbReference>
<dbReference type="SMR" id="Q8ZYA5"/>
<dbReference type="FunCoup" id="Q8ZYA5">
    <property type="interactions" value="4"/>
</dbReference>
<dbReference type="STRING" id="178306.PAE0875"/>
<dbReference type="EnsemblBacteria" id="AAL63090">
    <property type="protein sequence ID" value="AAL63090"/>
    <property type="gene ID" value="PAE0875"/>
</dbReference>
<dbReference type="GeneID" id="1465322"/>
<dbReference type="KEGG" id="pai:PAE0875"/>
<dbReference type="PATRIC" id="fig|178306.9.peg.642"/>
<dbReference type="eggNOG" id="arCOG00215">
    <property type="taxonomic scope" value="Archaea"/>
</dbReference>
<dbReference type="HOGENOM" id="CLU_030805_0_5_2"/>
<dbReference type="InParanoid" id="Q8ZYA5"/>
<dbReference type="Proteomes" id="UP000002439">
    <property type="component" value="Chromosome"/>
</dbReference>
<dbReference type="CDD" id="cd00885">
    <property type="entry name" value="cinA"/>
    <property type="match status" value="1"/>
</dbReference>
<dbReference type="Gene3D" id="3.40.980.10">
    <property type="entry name" value="MoaB/Mog-like domain"/>
    <property type="match status" value="1"/>
</dbReference>
<dbReference type="HAMAP" id="MF_00226_A">
    <property type="entry name" value="CinA_A"/>
    <property type="match status" value="1"/>
</dbReference>
<dbReference type="InterPro" id="IPR050101">
    <property type="entry name" value="CinA"/>
</dbReference>
<dbReference type="InterPro" id="IPR023055">
    <property type="entry name" value="CinA_Arc"/>
</dbReference>
<dbReference type="InterPro" id="IPR036425">
    <property type="entry name" value="MoaB/Mog-like_dom_sf"/>
</dbReference>
<dbReference type="InterPro" id="IPR001453">
    <property type="entry name" value="MoaB/Mog_dom"/>
</dbReference>
<dbReference type="NCBIfam" id="TIGR00177">
    <property type="entry name" value="molyb_syn"/>
    <property type="match status" value="1"/>
</dbReference>
<dbReference type="NCBIfam" id="NF002291">
    <property type="entry name" value="PRK01215.1"/>
    <property type="match status" value="1"/>
</dbReference>
<dbReference type="PANTHER" id="PTHR13939">
    <property type="entry name" value="NICOTINAMIDE-NUCLEOTIDE AMIDOHYDROLASE PNCC"/>
    <property type="match status" value="1"/>
</dbReference>
<dbReference type="PANTHER" id="PTHR13939:SF0">
    <property type="entry name" value="NMN AMIDOHYDROLASE-LIKE PROTEIN YFAY"/>
    <property type="match status" value="1"/>
</dbReference>
<dbReference type="Pfam" id="PF00994">
    <property type="entry name" value="MoCF_biosynth"/>
    <property type="match status" value="1"/>
</dbReference>
<dbReference type="SMART" id="SM00852">
    <property type="entry name" value="MoCF_biosynth"/>
    <property type="match status" value="1"/>
</dbReference>
<dbReference type="SUPFAM" id="SSF53218">
    <property type="entry name" value="Molybdenum cofactor biosynthesis proteins"/>
    <property type="match status" value="1"/>
</dbReference>
<gene>
    <name type="ordered locus">PAE0875</name>
</gene>
<comment type="similarity">
    <text evidence="1">Belongs to the CinA family.</text>
</comment>
<proteinExistence type="inferred from homology"/>
<evidence type="ECO:0000255" key="1">
    <source>
        <dbReference type="HAMAP-Rule" id="MF_00226"/>
    </source>
</evidence>